<evidence type="ECO:0000250" key="1"/>
<evidence type="ECO:0000305" key="2"/>
<comment type="subcellular location">
    <subcellularLocation>
        <location evidence="2">Cell membrane</location>
        <topology evidence="2">Lipid-anchor</topology>
        <orientation evidence="2">Cytoplasmic side</orientation>
    </subcellularLocation>
</comment>
<comment type="similarity">
    <text evidence="2">Belongs to the small GTPase superfamily. Rab family.</text>
</comment>
<feature type="chain" id="PRO_0000121167" description="Ras-related protein YPTC6">
    <location>
        <begin position="1"/>
        <end position="216"/>
    </location>
</feature>
<feature type="short sequence motif" description="Effector region" evidence="1">
    <location>
        <begin position="41"/>
        <end position="49"/>
    </location>
</feature>
<feature type="binding site" evidence="1">
    <location>
        <begin position="19"/>
        <end position="26"/>
    </location>
    <ligand>
        <name>GTP</name>
        <dbReference type="ChEBI" id="CHEBI:37565"/>
    </ligand>
</feature>
<feature type="binding site" evidence="1">
    <location>
        <begin position="67"/>
        <end position="71"/>
    </location>
    <ligand>
        <name>GTP</name>
        <dbReference type="ChEBI" id="CHEBI:37565"/>
    </ligand>
</feature>
<feature type="binding site" evidence="1">
    <location>
        <begin position="125"/>
        <end position="128"/>
    </location>
    <ligand>
        <name>GTP</name>
        <dbReference type="ChEBI" id="CHEBI:37565"/>
    </ligand>
</feature>
<feature type="lipid moiety-binding region" description="S-geranylgeranyl cysteine" evidence="1">
    <location>
        <position position="214"/>
    </location>
</feature>
<feature type="lipid moiety-binding region" description="S-geranylgeranyl cysteine" evidence="1">
    <location>
        <position position="215"/>
    </location>
</feature>
<reference key="1">
    <citation type="journal article" date="1995" name="Gene">
        <title>Analysis of a family of ypt genes and their products from Chlamydomonas reinhardtii.</title>
        <authorList>
            <person name="Dietmaier W."/>
            <person name="Fabry S."/>
            <person name="Huber H."/>
            <person name="Schmitt R."/>
        </authorList>
    </citation>
    <scope>NUCLEOTIDE SEQUENCE [GENOMIC DNA]</scope>
    <source>
        <strain>cw15</strain>
    </source>
</reference>
<gene>
    <name type="primary">YPTC6</name>
</gene>
<accession>Q39572</accession>
<sequence length="216" mass="24185">MSHKPDDDYDYLFKVVLIGDSGVGKSNLLSRFTRNEFSLESKSTIGVEFATRSIQVDGKTIKAQIWDTAGQERYRAITSAYYRGAVGALLVYDITKSVTFENVERWLKELRDHADSNIVIMLVGNKSDLKHLRDVQTEVAQAFCEREGLSFIETSALESTNVEKAFQQILTEIYHIVSKKVLDSEDNRPKIGEGRDVIVIDNAHDDGGKKKGGCCS</sequence>
<protein>
    <recommendedName>
        <fullName>Ras-related protein YPTC6</fullName>
    </recommendedName>
</protein>
<dbReference type="EMBL" id="U13169">
    <property type="protein sequence ID" value="AAA82729.1"/>
    <property type="molecule type" value="Genomic_DNA"/>
</dbReference>
<dbReference type="PIR" id="JC4108">
    <property type="entry name" value="JC4108"/>
</dbReference>
<dbReference type="RefSeq" id="XP_001691863.1">
    <property type="nucleotide sequence ID" value="XM_001691811.1"/>
</dbReference>
<dbReference type="SMR" id="Q39572"/>
<dbReference type="PaxDb" id="3055-EDP04353"/>
<dbReference type="EnsemblPlants" id="PNW85496">
    <property type="protein sequence ID" value="PNW85496"/>
    <property type="gene ID" value="CHLRE_03g189250v5"/>
</dbReference>
<dbReference type="Gramene" id="PNW85496">
    <property type="protein sequence ID" value="PNW85496"/>
    <property type="gene ID" value="CHLRE_03g189250v5"/>
</dbReference>
<dbReference type="KEGG" id="cre:CHLRE_03g189250v5"/>
<dbReference type="eggNOG" id="KOG0087">
    <property type="taxonomic scope" value="Eukaryota"/>
</dbReference>
<dbReference type="HOGENOM" id="CLU_041217_23_0_1"/>
<dbReference type="OMA" id="IMARRPD"/>
<dbReference type="OrthoDB" id="9989112at2759"/>
<dbReference type="GO" id="GO:0005886">
    <property type="term" value="C:plasma membrane"/>
    <property type="evidence" value="ECO:0007669"/>
    <property type="project" value="UniProtKB-SubCell"/>
</dbReference>
<dbReference type="GO" id="GO:0005525">
    <property type="term" value="F:GTP binding"/>
    <property type="evidence" value="ECO:0007669"/>
    <property type="project" value="UniProtKB-KW"/>
</dbReference>
<dbReference type="GO" id="GO:0003924">
    <property type="term" value="F:GTPase activity"/>
    <property type="evidence" value="ECO:0007669"/>
    <property type="project" value="InterPro"/>
</dbReference>
<dbReference type="CDD" id="cd01868">
    <property type="entry name" value="Rab11_like"/>
    <property type="match status" value="1"/>
</dbReference>
<dbReference type="FunFam" id="3.40.50.300:FF:000085">
    <property type="entry name" value="Putative ras-related protein rab-11a"/>
    <property type="match status" value="1"/>
</dbReference>
<dbReference type="Gene3D" id="3.40.50.300">
    <property type="entry name" value="P-loop containing nucleotide triphosphate hydrolases"/>
    <property type="match status" value="1"/>
</dbReference>
<dbReference type="InterPro" id="IPR027417">
    <property type="entry name" value="P-loop_NTPase"/>
</dbReference>
<dbReference type="InterPro" id="IPR050209">
    <property type="entry name" value="Rab_GTPases_membrane_traffic"/>
</dbReference>
<dbReference type="InterPro" id="IPR005225">
    <property type="entry name" value="Small_GTP-bd"/>
</dbReference>
<dbReference type="InterPro" id="IPR001806">
    <property type="entry name" value="Small_GTPase"/>
</dbReference>
<dbReference type="NCBIfam" id="TIGR00231">
    <property type="entry name" value="small_GTP"/>
    <property type="match status" value="1"/>
</dbReference>
<dbReference type="PANTHER" id="PTHR47979">
    <property type="entry name" value="DRAB11-RELATED"/>
    <property type="match status" value="1"/>
</dbReference>
<dbReference type="Pfam" id="PF00071">
    <property type="entry name" value="Ras"/>
    <property type="match status" value="1"/>
</dbReference>
<dbReference type="PRINTS" id="PR00449">
    <property type="entry name" value="RASTRNSFRMNG"/>
</dbReference>
<dbReference type="SMART" id="SM00175">
    <property type="entry name" value="RAB"/>
    <property type="match status" value="1"/>
</dbReference>
<dbReference type="SMART" id="SM00176">
    <property type="entry name" value="RAN"/>
    <property type="match status" value="1"/>
</dbReference>
<dbReference type="SMART" id="SM00173">
    <property type="entry name" value="RAS"/>
    <property type="match status" value="1"/>
</dbReference>
<dbReference type="SMART" id="SM00174">
    <property type="entry name" value="RHO"/>
    <property type="match status" value="1"/>
</dbReference>
<dbReference type="SUPFAM" id="SSF52540">
    <property type="entry name" value="P-loop containing nucleoside triphosphate hydrolases"/>
    <property type="match status" value="1"/>
</dbReference>
<dbReference type="PROSITE" id="PS51419">
    <property type="entry name" value="RAB"/>
    <property type="match status" value="1"/>
</dbReference>
<keyword id="KW-1003">Cell membrane</keyword>
<keyword id="KW-0342">GTP-binding</keyword>
<keyword id="KW-0449">Lipoprotein</keyword>
<keyword id="KW-0472">Membrane</keyword>
<keyword id="KW-0547">Nucleotide-binding</keyword>
<keyword id="KW-0636">Prenylation</keyword>
<name>YPTC6_CHLRE</name>
<proteinExistence type="inferred from homology"/>
<organism>
    <name type="scientific">Chlamydomonas reinhardtii</name>
    <name type="common">Chlamydomonas smithii</name>
    <dbReference type="NCBI Taxonomy" id="3055"/>
    <lineage>
        <taxon>Eukaryota</taxon>
        <taxon>Viridiplantae</taxon>
        <taxon>Chlorophyta</taxon>
        <taxon>core chlorophytes</taxon>
        <taxon>Chlorophyceae</taxon>
        <taxon>CS clade</taxon>
        <taxon>Chlamydomonadales</taxon>
        <taxon>Chlamydomonadaceae</taxon>
        <taxon>Chlamydomonas</taxon>
    </lineage>
</organism>